<organism>
    <name type="scientific">Influenza A virus (strain A/Beijing/353/1989 H3N2)</name>
    <dbReference type="NCBI Taxonomy" id="380949"/>
    <lineage>
        <taxon>Viruses</taxon>
        <taxon>Riboviria</taxon>
        <taxon>Orthornavirae</taxon>
        <taxon>Negarnaviricota</taxon>
        <taxon>Polyploviricotina</taxon>
        <taxon>Insthoviricetes</taxon>
        <taxon>Articulavirales</taxon>
        <taxon>Orthomyxoviridae</taxon>
        <taxon>Alphainfluenzavirus</taxon>
        <taxon>Alphainfluenzavirus influenzae</taxon>
        <taxon>Influenza A virus</taxon>
    </lineage>
</organism>
<evidence type="ECO:0000255" key="1">
    <source>
        <dbReference type="HAMAP-Rule" id="MF_04072"/>
    </source>
</evidence>
<evidence type="ECO:0000305" key="2"/>
<protein>
    <recommendedName>
        <fullName evidence="1">Hemagglutinin</fullName>
    </recommendedName>
    <component>
        <recommendedName>
            <fullName evidence="1">Hemagglutinin HA1 chain</fullName>
        </recommendedName>
    </component>
    <component>
        <recommendedName>
            <fullName evidence="1">Hemagglutinin HA2 chain</fullName>
        </recommendedName>
    </component>
</protein>
<organismHost>
    <name type="scientific">Aves</name>
    <dbReference type="NCBI Taxonomy" id="8782"/>
</organismHost>
<organismHost>
    <name type="scientific">Cetacea</name>
    <name type="common">whales</name>
    <dbReference type="NCBI Taxonomy" id="9721"/>
</organismHost>
<organismHost>
    <name type="scientific">Homo sapiens</name>
    <name type="common">Human</name>
    <dbReference type="NCBI Taxonomy" id="9606"/>
</organismHost>
<organismHost>
    <name type="scientific">Phocidae</name>
    <name type="common">true seals</name>
    <dbReference type="NCBI Taxonomy" id="9709"/>
</organismHost>
<organismHost>
    <name type="scientific">Sus scrofa</name>
    <name type="common">Pig</name>
    <dbReference type="NCBI Taxonomy" id="9823"/>
</organismHost>
<proteinExistence type="evidence at transcript level"/>
<feature type="signal peptide" evidence="1">
    <location>
        <begin position="1"/>
        <end position="16"/>
    </location>
</feature>
<feature type="chain" id="PRO_0000440530" description="Hemagglutinin" evidence="1">
    <location>
        <begin position="17"/>
        <end position="566"/>
    </location>
</feature>
<feature type="chain" id="PRO_0000280181" description="Hemagglutinin HA1 chain">
    <location>
        <begin position="17"/>
        <end position="344"/>
    </location>
</feature>
<feature type="chain" id="PRO_0000280182" description="Hemagglutinin HA2 chain" evidence="1">
    <location>
        <begin position="346"/>
        <end position="566"/>
    </location>
</feature>
<feature type="topological domain" description="Extracellular" evidence="1">
    <location>
        <begin position="17"/>
        <end position="530"/>
    </location>
</feature>
<feature type="transmembrane region" description="Helical" evidence="1">
    <location>
        <begin position="531"/>
        <end position="551"/>
    </location>
</feature>
<feature type="topological domain" description="Cytoplasmic" evidence="1">
    <location>
        <begin position="552"/>
        <end position="566"/>
    </location>
</feature>
<feature type="site" description="Cleavage; by host" evidence="1">
    <location>
        <begin position="345"/>
        <end position="346"/>
    </location>
</feature>
<feature type="lipid moiety-binding region" description="S-palmitoyl cysteine; by host" evidence="1">
    <location>
        <position position="555"/>
    </location>
</feature>
<feature type="lipid moiety-binding region" description="S-palmitoyl cysteine; by host" evidence="1">
    <location>
        <position position="562"/>
    </location>
</feature>
<feature type="lipid moiety-binding region" description="S-palmitoyl cysteine; by host" evidence="1">
    <location>
        <position position="565"/>
    </location>
</feature>
<feature type="glycosylation site" description="N-linked (GlcNAc...) asparagine; by host" evidence="1">
    <location>
        <position position="24"/>
    </location>
</feature>
<feature type="glycosylation site" description="N-linked (GlcNAc...) asparagine; by host" evidence="1">
    <location>
        <position position="38"/>
    </location>
</feature>
<feature type="glycosylation site" description="N-linked (GlcNAc...) asparagine; by host" evidence="1">
    <location>
        <position position="54"/>
    </location>
</feature>
<feature type="glycosylation site" description="N-linked (GlcNAc...) asparagine; by host" evidence="1">
    <location>
        <position position="79"/>
    </location>
</feature>
<feature type="glycosylation site" description="N-linked (GlcNAc...) asparagine; by host" evidence="1">
    <location>
        <position position="142"/>
    </location>
</feature>
<feature type="glycosylation site" description="N-linked (GlcNAc...) asparagine; by host" evidence="1">
    <location>
        <position position="181"/>
    </location>
</feature>
<feature type="glycosylation site" description="N-linked (GlcNAc...) asparagine; by host" evidence="1">
    <location>
        <position position="262"/>
    </location>
</feature>
<feature type="glycosylation site" description="N-linked (GlcNAc...) asparagine; by host" evidence="1">
    <location>
        <position position="301"/>
    </location>
</feature>
<feature type="glycosylation site" description="N-linked (GlcNAc...) asparagine; by host" evidence="1">
    <location>
        <position position="499"/>
    </location>
</feature>
<feature type="disulfide bond" description="Interchain (between HA1 and HA2 chains)" evidence="1">
    <location>
        <begin position="30"/>
        <end position="482"/>
    </location>
</feature>
<feature type="disulfide bond" evidence="1">
    <location>
        <begin position="68"/>
        <end position="293"/>
    </location>
</feature>
<feature type="disulfide bond" evidence="1">
    <location>
        <begin position="80"/>
        <end position="92"/>
    </location>
</feature>
<feature type="disulfide bond" evidence="1">
    <location>
        <begin position="113"/>
        <end position="155"/>
    </location>
</feature>
<feature type="disulfide bond" evidence="1">
    <location>
        <begin position="297"/>
        <end position="321"/>
    </location>
</feature>
<feature type="disulfide bond" evidence="1">
    <location>
        <begin position="489"/>
        <end position="493"/>
    </location>
</feature>
<feature type="sequence conflict" description="In Ref. 3; AAB66751." evidence="2" ref="3">
    <original>S</original>
    <variation>I</variation>
    <location>
        <position position="202"/>
    </location>
</feature>
<feature type="sequence conflict" description="In Ref. 1; AAB58297." evidence="2" ref="1">
    <original>N</original>
    <variation>K</variation>
    <location>
        <position position="209"/>
    </location>
</feature>
<feature type="sequence conflict" description="In Ref. 2; AAT64741." evidence="2" ref="2">
    <original>N</original>
    <variation>D</variation>
    <location>
        <position position="364"/>
    </location>
</feature>
<keyword id="KW-1167">Clathrin- and caveolin-independent endocytosis of virus by host</keyword>
<keyword id="KW-1165">Clathrin-mediated endocytosis of virus by host</keyword>
<keyword id="KW-1015">Disulfide bond</keyword>
<keyword id="KW-1170">Fusion of virus membrane with host endosomal membrane</keyword>
<keyword id="KW-1168">Fusion of virus membrane with host membrane</keyword>
<keyword id="KW-0325">Glycoprotein</keyword>
<keyword id="KW-0348">Hemagglutinin</keyword>
<keyword id="KW-1032">Host cell membrane</keyword>
<keyword id="KW-1043">Host membrane</keyword>
<keyword id="KW-0945">Host-virus interaction</keyword>
<keyword id="KW-0449">Lipoprotein</keyword>
<keyword id="KW-0472">Membrane</keyword>
<keyword id="KW-0564">Palmitate</keyword>
<keyword id="KW-0732">Signal</keyword>
<keyword id="KW-0812">Transmembrane</keyword>
<keyword id="KW-1133">Transmembrane helix</keyword>
<keyword id="KW-1161">Viral attachment to host cell</keyword>
<keyword id="KW-0261">Viral envelope protein</keyword>
<keyword id="KW-1162">Viral penetration into host cytoplasm</keyword>
<keyword id="KW-0946">Virion</keyword>
<keyword id="KW-1164">Virus endocytosis by host</keyword>
<keyword id="KW-1160">Virus entry into host cell</keyword>
<sequence>MKTIIALSYILCLVFAQKLPGNDNSTATLCLGHHAVPNGTLVKTITNDQIEVTNATELVQSSSTGRICDSPHRILDGKNCTLIDALLGDPHCDGFQNKEWDLFVERSKAYSNCYPYDVPDYASLRSLVASSGTLEFINEDFNWTGVAQSGESYACKRGSVKSFFSRLNWLHESEYKYPALNVTMPNNGKFDKLYIWGVHHPSTDREQTNLYVRASGRVTVSTKRSQQTVIPNIGSRPWVRGLSSRISIYWTIVKPGDILLINSTGNLIAPRGYFKIRTGKSSIMRSDAPIGTCSSECITPNGSIPNDKPFQNVNRITYGACPRYVKQNTLKLATGMRNVPEKQTRGIFGAIAGFIENGWEGMVNGWYGFRHQNSEGTGQAADLKSTQAAIDQINGKLNRLIEKTNEKFHQIEKEFSEVEGRIQDLEKYVEDTKIDLWSYNAELLVALENQHTIDLTDSEMNKLFEKTRKQLRENAEDMGNGCFKIYHKCDNACIGSIRNGTYDHDVYRDEALNNRFQIKGVELKSGYKDWILWISFAISCFLLCVVLLGFIMWACQKGNIRCNICI</sequence>
<comment type="function">
    <text evidence="1">Binds to sialic acid-containing receptors on the cell surface, bringing about the attachment of the virus particle to the cell. This attachment induces virion internalization either through clathrin-dependent endocytosis or through clathrin- and caveolin-independent pathway. Plays a major role in the determination of host range restriction and virulence. Class I viral fusion protein. Responsible for penetration of the virus into the cell cytoplasm by mediating the fusion of the membrane of the endocytosed virus particle with the endosomal membrane. Low pH in endosomes induces an irreversible conformational change in HA2, releasing the fusion hydrophobic peptide. Several trimers are required to form a competent fusion pore.</text>
</comment>
<comment type="subunit">
    <text evidence="1">Homotrimer of disulfide-linked HA1-HA2.</text>
</comment>
<comment type="subcellular location">
    <subcellularLocation>
        <location evidence="1">Virion membrane</location>
        <topology evidence="1">Single-pass type I membrane protein</topology>
    </subcellularLocation>
    <subcellularLocation>
        <location evidence="1">Host apical cell membrane</location>
        <topology evidence="1">Single-pass type I membrane protein</topology>
    </subcellularLocation>
    <text evidence="1">Targeted to the apical plasma membrane in epithelial polarized cells through a signal present in the transmembrane domain. Associated with glycosphingolipid- and cholesterol-enriched detergent-resistant lipid rafts.</text>
</comment>
<comment type="PTM">
    <text evidence="1">Palmitoylated.</text>
</comment>
<comment type="PTM">
    <text evidence="1">In natural infection, inactive HA is matured into HA1 and HA2 outside the cell by one or more trypsin-like, arginine-specific endoprotease secreted by the bronchial epithelial cells. One identified protease that may be involved in this process is secreted in lungs by club cells.</text>
</comment>
<comment type="miscellaneous">
    <text>Major glycoprotein, comprises over 80% of the envelope proteins present in virus particle.</text>
</comment>
<comment type="miscellaneous">
    <text>The extent of infection into host organism is determined by HA. Influenza viruses bud from the apical surface of polarized epithelial cells (e.g. bronchial epithelial cells) into lumen of lungs and are therefore usually pneumotropic. The reason is that HA is cleaved by tryptase clara which is restricted to lungs. However, HAs of H5 and H7 pantropic avian viruses subtypes can be cleaved by furin and subtilisin-type enzymes, allowing the virus to grow in other organs than lungs.</text>
</comment>
<comment type="miscellaneous">
    <text evidence="2">The influenza A genome consist of 8 RNA segments. Genetic variation of hemagglutinin and/or neuraminidase genes results in the emergence of new influenza strains. The mechanism of variation can be the result of point mutations or the result of genetic reassortment between segments of two different strains.</text>
</comment>
<comment type="similarity">
    <text evidence="1">Belongs to the influenza viruses hemagglutinin family.</text>
</comment>
<accession>O11283</accession>
<accession>O40676</accession>
<accession>Q6DME6</accession>
<name>HEMA_I89A2</name>
<reference key="1">
    <citation type="submission" date="1997-04" db="EMBL/GenBank/DDBJ databases">
        <title>Nucleotide sequence of the complete HA of influenza virus A/Beijing/353/89 (H3 subtype).</title>
        <authorList>
            <person name="Reading P.C."/>
            <person name="Sahasrabudhe A."/>
        </authorList>
    </citation>
    <scope>NUCLEOTIDE SEQUENCE [MRNA]</scope>
</reference>
<reference key="2">
    <citation type="journal article" date="2004" name="Science">
        <title>Mapping the antigenic and genetic evolution of influenza virus.</title>
        <authorList>
            <person name="Smith D.J."/>
            <person name="Lapedes A.S."/>
            <person name="de Jong J.C."/>
            <person name="Bestebroer T.M."/>
            <person name="Rimmelzwaan G.F."/>
            <person name="Osterhaus A.D."/>
            <person name="Fouchier R.A."/>
        </authorList>
    </citation>
    <scope>NUCLEOTIDE SEQUENCE [GENOMIC RNA] OF 1-562</scope>
</reference>
<reference key="3">
    <citation type="journal article" date="1997" name="Proc. Natl. Acad. Sci. U.S.A.">
        <title>Long term trends in the evolution of H(3) HA1 human influenza type A.</title>
        <authorList>
            <person name="Fitch W.M."/>
            <person name="Bush R.M."/>
            <person name="Bender C.A."/>
            <person name="Cox N.J."/>
        </authorList>
    </citation>
    <scope>NUCLEOTIDE SEQUENCE [GENOMIC RNA] OF 17-345</scope>
</reference>
<dbReference type="EMBL" id="U97740">
    <property type="protein sequence ID" value="AAB58297.1"/>
    <property type="molecule type" value="mRNA"/>
</dbReference>
<dbReference type="EMBL" id="AY661066">
    <property type="protein sequence ID" value="AAT64741.1"/>
    <property type="molecule type" value="Genomic_DNA"/>
</dbReference>
<dbReference type="EMBL" id="AF008684">
    <property type="protein sequence ID" value="AAB66751.1"/>
    <property type="molecule type" value="Genomic_RNA"/>
</dbReference>
<dbReference type="SMR" id="O11283"/>
<dbReference type="GlyCosmos" id="O11283">
    <property type="glycosylation" value="9 sites, No reported glycans"/>
</dbReference>
<dbReference type="GO" id="GO:0020002">
    <property type="term" value="C:host cell plasma membrane"/>
    <property type="evidence" value="ECO:0007669"/>
    <property type="project" value="UniProtKB-SubCell"/>
</dbReference>
<dbReference type="GO" id="GO:0016020">
    <property type="term" value="C:membrane"/>
    <property type="evidence" value="ECO:0007669"/>
    <property type="project" value="UniProtKB-UniRule"/>
</dbReference>
<dbReference type="GO" id="GO:0019031">
    <property type="term" value="C:viral envelope"/>
    <property type="evidence" value="ECO:0007669"/>
    <property type="project" value="UniProtKB-UniRule"/>
</dbReference>
<dbReference type="GO" id="GO:0055036">
    <property type="term" value="C:virion membrane"/>
    <property type="evidence" value="ECO:0007669"/>
    <property type="project" value="UniProtKB-SubCell"/>
</dbReference>
<dbReference type="GO" id="GO:0046789">
    <property type="term" value="F:host cell surface receptor binding"/>
    <property type="evidence" value="ECO:0007669"/>
    <property type="project" value="UniProtKB-UniRule"/>
</dbReference>
<dbReference type="GO" id="GO:0075512">
    <property type="term" value="P:clathrin-dependent endocytosis of virus by host cell"/>
    <property type="evidence" value="ECO:0007669"/>
    <property type="project" value="UniProtKB-UniRule"/>
</dbReference>
<dbReference type="GO" id="GO:0039654">
    <property type="term" value="P:fusion of virus membrane with host endosome membrane"/>
    <property type="evidence" value="ECO:0007669"/>
    <property type="project" value="UniProtKB-UniRule"/>
</dbReference>
<dbReference type="GO" id="GO:0019064">
    <property type="term" value="P:fusion of virus membrane with host plasma membrane"/>
    <property type="evidence" value="ECO:0007669"/>
    <property type="project" value="InterPro"/>
</dbReference>
<dbReference type="GO" id="GO:0046761">
    <property type="term" value="P:viral budding from plasma membrane"/>
    <property type="evidence" value="ECO:0007669"/>
    <property type="project" value="UniProtKB-UniRule"/>
</dbReference>
<dbReference type="GO" id="GO:0019062">
    <property type="term" value="P:virion attachment to host cell"/>
    <property type="evidence" value="ECO:0007669"/>
    <property type="project" value="UniProtKB-KW"/>
</dbReference>
<dbReference type="FunFam" id="3.90.20.10:FF:000001">
    <property type="entry name" value="Hemagglutinin"/>
    <property type="match status" value="1"/>
</dbReference>
<dbReference type="FunFam" id="3.90.209.20:FF:000001">
    <property type="entry name" value="Hemagglutinin"/>
    <property type="match status" value="1"/>
</dbReference>
<dbReference type="Gene3D" id="3.90.20.10">
    <property type="match status" value="1"/>
</dbReference>
<dbReference type="Gene3D" id="3.90.209.20">
    <property type="match status" value="1"/>
</dbReference>
<dbReference type="HAMAP" id="MF_04072">
    <property type="entry name" value="INFV_HEMA"/>
    <property type="match status" value="1"/>
</dbReference>
<dbReference type="InterPro" id="IPR008980">
    <property type="entry name" value="Capsid_hemagglutn"/>
</dbReference>
<dbReference type="InterPro" id="IPR013828">
    <property type="entry name" value="Hemagglutn_HA1_a/b_dom_sf"/>
</dbReference>
<dbReference type="InterPro" id="IPR000149">
    <property type="entry name" value="Hemagglutn_influenz_A"/>
</dbReference>
<dbReference type="InterPro" id="IPR001364">
    <property type="entry name" value="Hemagglutn_influenz_A/B"/>
</dbReference>
<dbReference type="Pfam" id="PF00509">
    <property type="entry name" value="Hemagglutinin"/>
    <property type="match status" value="1"/>
</dbReference>
<dbReference type="PRINTS" id="PR00330">
    <property type="entry name" value="HEMAGGLUTN1"/>
</dbReference>
<dbReference type="PRINTS" id="PR00329">
    <property type="entry name" value="HEMAGGLUTN12"/>
</dbReference>
<dbReference type="SUPFAM" id="SSF58064">
    <property type="entry name" value="Influenza hemagglutinin (stalk)"/>
    <property type="match status" value="1"/>
</dbReference>
<dbReference type="SUPFAM" id="SSF49818">
    <property type="entry name" value="Viral protein domain"/>
    <property type="match status" value="1"/>
</dbReference>
<gene>
    <name evidence="1" type="primary">HA</name>
</gene>